<proteinExistence type="inferred from homology"/>
<accession>Q8HVV0</accession>
<geneLocation type="chloroplast"/>
<comment type="function">
    <text evidence="1">NDH shuttles electrons from NAD(P)H:plastoquinone, via FMN and iron-sulfur (Fe-S) centers, to quinones in the photosynthetic chain and possibly in a chloroplast respiratory chain. The immediate electron acceptor for the enzyme in this species is believed to be plastoquinone. Couples the redox reaction to proton translocation, and thus conserves the redox energy in a proton gradient.</text>
</comment>
<comment type="catalytic activity">
    <reaction evidence="1">
        <text>a plastoquinone + NADH + (n+1) H(+)(in) = a plastoquinol + NAD(+) + n H(+)(out)</text>
        <dbReference type="Rhea" id="RHEA:42608"/>
        <dbReference type="Rhea" id="RHEA-COMP:9561"/>
        <dbReference type="Rhea" id="RHEA-COMP:9562"/>
        <dbReference type="ChEBI" id="CHEBI:15378"/>
        <dbReference type="ChEBI" id="CHEBI:17757"/>
        <dbReference type="ChEBI" id="CHEBI:57540"/>
        <dbReference type="ChEBI" id="CHEBI:57945"/>
        <dbReference type="ChEBI" id="CHEBI:62192"/>
    </reaction>
</comment>
<comment type="catalytic activity">
    <reaction evidence="1">
        <text>a plastoquinone + NADPH + (n+1) H(+)(in) = a plastoquinol + NADP(+) + n H(+)(out)</text>
        <dbReference type="Rhea" id="RHEA:42612"/>
        <dbReference type="Rhea" id="RHEA-COMP:9561"/>
        <dbReference type="Rhea" id="RHEA-COMP:9562"/>
        <dbReference type="ChEBI" id="CHEBI:15378"/>
        <dbReference type="ChEBI" id="CHEBI:17757"/>
        <dbReference type="ChEBI" id="CHEBI:57783"/>
        <dbReference type="ChEBI" id="CHEBI:58349"/>
        <dbReference type="ChEBI" id="CHEBI:62192"/>
    </reaction>
</comment>
<comment type="cofactor">
    <cofactor evidence="1">
        <name>[4Fe-4S] cluster</name>
        <dbReference type="ChEBI" id="CHEBI:49883"/>
    </cofactor>
    <text evidence="1">Binds 2 [4Fe-4S] clusters per subunit.</text>
</comment>
<comment type="subunit">
    <text evidence="1">NDH is composed of at least 16 different subunits, 5 of which are encoded in the nucleus.</text>
</comment>
<comment type="subcellular location">
    <subcellularLocation>
        <location evidence="1">Plastid</location>
        <location evidence="1">Chloroplast thylakoid membrane</location>
        <topology evidence="1">Peripheral membrane protein</topology>
    </subcellularLocation>
</comment>
<comment type="similarity">
    <text evidence="1">Belongs to the complex I 23 kDa subunit family.</text>
</comment>
<organism>
    <name type="scientific">Calyptocarpus vialis</name>
    <name type="common">Creeping Cinderella weed</name>
    <name type="synonym">Synedrella vialis</name>
    <dbReference type="NCBI Taxonomy" id="53717"/>
    <lineage>
        <taxon>Eukaryota</taxon>
        <taxon>Viridiplantae</taxon>
        <taxon>Streptophyta</taxon>
        <taxon>Embryophyta</taxon>
        <taxon>Tracheophyta</taxon>
        <taxon>Spermatophyta</taxon>
        <taxon>Magnoliopsida</taxon>
        <taxon>eudicotyledons</taxon>
        <taxon>Gunneridae</taxon>
        <taxon>Pentapetalae</taxon>
        <taxon>asterids</taxon>
        <taxon>campanulids</taxon>
        <taxon>Asterales</taxon>
        <taxon>Asteraceae</taxon>
        <taxon>Asteroideae</taxon>
        <taxon>Heliantheae alliance</taxon>
        <taxon>Heliantheae</taxon>
        <taxon>Calyptocarpus</taxon>
    </lineage>
</organism>
<reference key="1">
    <citation type="submission" date="2003-01" db="EMBL/GenBank/DDBJ databases">
        <title>Chloroplast DNA phylogeny of tribe Heliantheae (Asteraceae).</title>
        <authorList>
            <person name="Panero J.L."/>
            <person name="Baldwin B.G."/>
            <person name="Schilling E.E."/>
            <person name="Clevinger J.A."/>
        </authorList>
    </citation>
    <scope>NUCLEOTIDE SEQUENCE [GENOMIC DNA]</scope>
</reference>
<feature type="chain" id="PRO_0000250763" description="NAD(P)H-quinone oxidoreductase subunit I, chloroplastic">
    <location>
        <begin position="1"/>
        <end position="166"/>
    </location>
</feature>
<feature type="domain" description="4Fe-4S ferredoxin-type 1" evidence="1">
    <location>
        <begin position="55"/>
        <end position="84"/>
    </location>
</feature>
<feature type="domain" description="4Fe-4S ferredoxin-type 2" evidence="1">
    <location>
        <begin position="95"/>
        <end position="124"/>
    </location>
</feature>
<feature type="binding site" evidence="1">
    <location>
        <position position="64"/>
    </location>
    <ligand>
        <name>[4Fe-4S] cluster</name>
        <dbReference type="ChEBI" id="CHEBI:49883"/>
        <label>1</label>
    </ligand>
</feature>
<feature type="binding site" evidence="1">
    <location>
        <position position="67"/>
    </location>
    <ligand>
        <name>[4Fe-4S] cluster</name>
        <dbReference type="ChEBI" id="CHEBI:49883"/>
        <label>1</label>
    </ligand>
</feature>
<feature type="binding site" evidence="1">
    <location>
        <position position="70"/>
    </location>
    <ligand>
        <name>[4Fe-4S] cluster</name>
        <dbReference type="ChEBI" id="CHEBI:49883"/>
        <label>1</label>
    </ligand>
</feature>
<feature type="binding site" evidence="1">
    <location>
        <position position="74"/>
    </location>
    <ligand>
        <name>[4Fe-4S] cluster</name>
        <dbReference type="ChEBI" id="CHEBI:49883"/>
        <label>2</label>
    </ligand>
</feature>
<feature type="binding site" evidence="1">
    <location>
        <position position="104"/>
    </location>
    <ligand>
        <name>[4Fe-4S] cluster</name>
        <dbReference type="ChEBI" id="CHEBI:49883"/>
        <label>2</label>
    </ligand>
</feature>
<feature type="binding site" evidence="1">
    <location>
        <position position="107"/>
    </location>
    <ligand>
        <name>[4Fe-4S] cluster</name>
        <dbReference type="ChEBI" id="CHEBI:49883"/>
        <label>2</label>
    </ligand>
</feature>
<feature type="binding site" evidence="1">
    <location>
        <position position="110"/>
    </location>
    <ligand>
        <name>[4Fe-4S] cluster</name>
        <dbReference type="ChEBI" id="CHEBI:49883"/>
        <label>2</label>
    </ligand>
</feature>
<feature type="binding site" evidence="1">
    <location>
        <position position="114"/>
    </location>
    <ligand>
        <name>[4Fe-4S] cluster</name>
        <dbReference type="ChEBI" id="CHEBI:49883"/>
        <label>1</label>
    </ligand>
</feature>
<keyword id="KW-0004">4Fe-4S</keyword>
<keyword id="KW-0150">Chloroplast</keyword>
<keyword id="KW-0408">Iron</keyword>
<keyword id="KW-0411">Iron-sulfur</keyword>
<keyword id="KW-0472">Membrane</keyword>
<keyword id="KW-0479">Metal-binding</keyword>
<keyword id="KW-0520">NAD</keyword>
<keyword id="KW-0521">NADP</keyword>
<keyword id="KW-0934">Plastid</keyword>
<keyword id="KW-0618">Plastoquinone</keyword>
<keyword id="KW-0874">Quinone</keyword>
<keyword id="KW-0677">Repeat</keyword>
<keyword id="KW-0793">Thylakoid</keyword>
<keyword id="KW-1278">Translocase</keyword>
<sequence length="166" mass="19488">MFPMVTEFMNYGQQTVRAARYIGQGFMITLSHANRLPVTIQYPYEKLITSERFRGRIHFEFDKCIACEVCVRVCPIDLPVVDWKLETDIRKKRLLNYSIDFGICIFCGNCVEYCPTNCLSMTEEYELSTYDRHELNYNQIALGRLPMSIIDDYTIRTILNLPEIKN</sequence>
<evidence type="ECO:0000255" key="1">
    <source>
        <dbReference type="HAMAP-Rule" id="MF_01351"/>
    </source>
</evidence>
<protein>
    <recommendedName>
        <fullName evidence="1">NAD(P)H-quinone oxidoreductase subunit I, chloroplastic</fullName>
        <ecNumber evidence="1">7.1.1.-</ecNumber>
    </recommendedName>
    <alternativeName>
        <fullName evidence="1">NAD(P)H dehydrogenase subunit I</fullName>
        <shortName evidence="1">NDH subunit I</shortName>
    </alternativeName>
    <alternativeName>
        <fullName evidence="1">NADH-plastoquinone oxidoreductase subunit I</fullName>
    </alternativeName>
</protein>
<dbReference type="EC" id="7.1.1.-" evidence="1"/>
<dbReference type="EMBL" id="AF383762">
    <property type="protein sequence ID" value="AAN61704.1"/>
    <property type="molecule type" value="Genomic_DNA"/>
</dbReference>
<dbReference type="SMR" id="Q8HVV0"/>
<dbReference type="GO" id="GO:0009535">
    <property type="term" value="C:chloroplast thylakoid membrane"/>
    <property type="evidence" value="ECO:0007669"/>
    <property type="project" value="UniProtKB-SubCell"/>
</dbReference>
<dbReference type="GO" id="GO:0051539">
    <property type="term" value="F:4 iron, 4 sulfur cluster binding"/>
    <property type="evidence" value="ECO:0007669"/>
    <property type="project" value="UniProtKB-KW"/>
</dbReference>
<dbReference type="GO" id="GO:0005506">
    <property type="term" value="F:iron ion binding"/>
    <property type="evidence" value="ECO:0007669"/>
    <property type="project" value="UniProtKB-UniRule"/>
</dbReference>
<dbReference type="GO" id="GO:0008137">
    <property type="term" value="F:NADH dehydrogenase (ubiquinone) activity"/>
    <property type="evidence" value="ECO:0007669"/>
    <property type="project" value="InterPro"/>
</dbReference>
<dbReference type="GO" id="GO:0048038">
    <property type="term" value="F:quinone binding"/>
    <property type="evidence" value="ECO:0007669"/>
    <property type="project" value="UniProtKB-KW"/>
</dbReference>
<dbReference type="GO" id="GO:0019684">
    <property type="term" value="P:photosynthesis, light reaction"/>
    <property type="evidence" value="ECO:0007669"/>
    <property type="project" value="UniProtKB-UniRule"/>
</dbReference>
<dbReference type="FunFam" id="3.30.70.3270:FF:000006">
    <property type="entry name" value="NAD(P)H-quinone oxidoreductase subunit I, chloroplastic"/>
    <property type="match status" value="1"/>
</dbReference>
<dbReference type="Gene3D" id="3.30.70.3270">
    <property type="match status" value="1"/>
</dbReference>
<dbReference type="HAMAP" id="MF_01351">
    <property type="entry name" value="NDH1_NuoI"/>
    <property type="match status" value="1"/>
</dbReference>
<dbReference type="InterPro" id="IPR017896">
    <property type="entry name" value="4Fe4S_Fe-S-bd"/>
</dbReference>
<dbReference type="InterPro" id="IPR017900">
    <property type="entry name" value="4Fe4S_Fe_S_CS"/>
</dbReference>
<dbReference type="InterPro" id="IPR010226">
    <property type="entry name" value="NADH_quinone_OxRdtase_chainI"/>
</dbReference>
<dbReference type="InterPro" id="IPR004497">
    <property type="entry name" value="NDHI"/>
</dbReference>
<dbReference type="NCBIfam" id="TIGR00403">
    <property type="entry name" value="ndhI"/>
    <property type="match status" value="1"/>
</dbReference>
<dbReference type="NCBIfam" id="TIGR01971">
    <property type="entry name" value="NuoI"/>
    <property type="match status" value="1"/>
</dbReference>
<dbReference type="NCBIfam" id="NF004537">
    <property type="entry name" value="PRK05888.1-3"/>
    <property type="match status" value="1"/>
</dbReference>
<dbReference type="PANTHER" id="PTHR47275">
    <property type="entry name" value="NAD(P)H-QUINONE OXIDOREDUCTASE SUBUNIT I, CHLOROPLASTIC"/>
    <property type="match status" value="1"/>
</dbReference>
<dbReference type="PANTHER" id="PTHR47275:SF1">
    <property type="entry name" value="NAD(P)H-QUINONE OXIDOREDUCTASE SUBUNIT I, CHLOROPLASTIC"/>
    <property type="match status" value="1"/>
</dbReference>
<dbReference type="Pfam" id="PF00037">
    <property type="entry name" value="Fer4"/>
    <property type="match status" value="2"/>
</dbReference>
<dbReference type="SUPFAM" id="SSF54862">
    <property type="entry name" value="4Fe-4S ferredoxins"/>
    <property type="match status" value="1"/>
</dbReference>
<dbReference type="PROSITE" id="PS00198">
    <property type="entry name" value="4FE4S_FER_1"/>
    <property type="match status" value="2"/>
</dbReference>
<dbReference type="PROSITE" id="PS51379">
    <property type="entry name" value="4FE4S_FER_2"/>
    <property type="match status" value="2"/>
</dbReference>
<name>NDHI_CALVA</name>
<gene>
    <name evidence="1" type="primary">ndhI</name>
</gene>